<keyword id="KW-0963">Cytoplasm</keyword>
<keyword id="KW-0227">DNA damage</keyword>
<keyword id="KW-0233">DNA recombination</keyword>
<keyword id="KW-0234">DNA repair</keyword>
<keyword id="KW-0238">DNA-binding</keyword>
<keyword id="KW-1185">Reference proteome</keyword>
<comment type="function">
    <text evidence="1">The RuvA-RuvB-RuvC complex processes Holliday junction (HJ) DNA during genetic recombination and DNA repair, while the RuvA-RuvB complex plays an important role in the rescue of blocked DNA replication forks via replication fork reversal (RFR). RuvA specifically binds to HJ cruciform DNA, conferring on it an open structure. The RuvB hexamer acts as an ATP-dependent pump, pulling dsDNA into and through the RuvAB complex. HJ branch migration allows RuvC to scan DNA until it finds its consensus sequence, where it cleaves and resolves the cruciform DNA.</text>
</comment>
<comment type="subunit">
    <text evidence="1">Homotetramer. Forms an RuvA(8)-RuvB(12)-Holliday junction (HJ) complex. HJ DNA is sandwiched between 2 RuvA tetramers; dsDNA enters through RuvA and exits via RuvB. An RuvB hexamer assembles on each DNA strand where it exits the tetramer. Each RuvB hexamer is contacted by two RuvA subunits (via domain III) on 2 adjacent RuvB subunits; this complex drives branch migration. In the full resolvosome a probable DNA-RuvA(4)-RuvB(12)-RuvC(2) complex forms which resolves the HJ.</text>
</comment>
<comment type="subcellular location">
    <subcellularLocation>
        <location evidence="1">Cytoplasm</location>
    </subcellularLocation>
</comment>
<comment type="domain">
    <text evidence="1">Has three domains with a flexible linker between the domains II and III and assumes an 'L' shape. Domain III is highly mobile and contacts RuvB.</text>
</comment>
<comment type="similarity">
    <text evidence="1">Belongs to the RuvA family.</text>
</comment>
<evidence type="ECO:0000255" key="1">
    <source>
        <dbReference type="HAMAP-Rule" id="MF_00031"/>
    </source>
</evidence>
<gene>
    <name evidence="1" type="primary">ruvA</name>
    <name type="ordered locus">CT_501</name>
</gene>
<protein>
    <recommendedName>
        <fullName evidence="1">Holliday junction branch migration complex subunit RuvA</fullName>
    </recommendedName>
</protein>
<dbReference type="EMBL" id="AE001273">
    <property type="protein sequence ID" value="AAC68102.1"/>
    <property type="molecule type" value="Genomic_DNA"/>
</dbReference>
<dbReference type="PIR" id="C71504">
    <property type="entry name" value="C71504"/>
</dbReference>
<dbReference type="RefSeq" id="NP_220016.1">
    <property type="nucleotide sequence ID" value="NC_000117.1"/>
</dbReference>
<dbReference type="RefSeq" id="WP_010725220.1">
    <property type="nucleotide sequence ID" value="NC_000117.1"/>
</dbReference>
<dbReference type="SMR" id="O84509"/>
<dbReference type="FunCoup" id="O84509">
    <property type="interactions" value="183"/>
</dbReference>
<dbReference type="STRING" id="272561.CT_501"/>
<dbReference type="EnsemblBacteria" id="AAC68102">
    <property type="protein sequence ID" value="AAC68102"/>
    <property type="gene ID" value="CT_501"/>
</dbReference>
<dbReference type="GeneID" id="884276"/>
<dbReference type="KEGG" id="ctr:CT_501"/>
<dbReference type="PATRIC" id="fig|272561.5.peg.545"/>
<dbReference type="HOGENOM" id="CLU_087936_3_0_0"/>
<dbReference type="InParanoid" id="O84509"/>
<dbReference type="OrthoDB" id="5293449at2"/>
<dbReference type="Proteomes" id="UP000000431">
    <property type="component" value="Chromosome"/>
</dbReference>
<dbReference type="GO" id="GO:0005737">
    <property type="term" value="C:cytoplasm"/>
    <property type="evidence" value="ECO:0007669"/>
    <property type="project" value="UniProtKB-SubCell"/>
</dbReference>
<dbReference type="GO" id="GO:0009379">
    <property type="term" value="C:Holliday junction helicase complex"/>
    <property type="evidence" value="ECO:0007669"/>
    <property type="project" value="InterPro"/>
</dbReference>
<dbReference type="GO" id="GO:0048476">
    <property type="term" value="C:Holliday junction resolvase complex"/>
    <property type="evidence" value="ECO:0007669"/>
    <property type="project" value="UniProtKB-UniRule"/>
</dbReference>
<dbReference type="GO" id="GO:0005524">
    <property type="term" value="F:ATP binding"/>
    <property type="evidence" value="ECO:0007669"/>
    <property type="project" value="InterPro"/>
</dbReference>
<dbReference type="GO" id="GO:0000400">
    <property type="term" value="F:four-way junction DNA binding"/>
    <property type="evidence" value="ECO:0007669"/>
    <property type="project" value="UniProtKB-UniRule"/>
</dbReference>
<dbReference type="GO" id="GO:0009378">
    <property type="term" value="F:four-way junction helicase activity"/>
    <property type="evidence" value="ECO:0000318"/>
    <property type="project" value="GO_Central"/>
</dbReference>
<dbReference type="GO" id="GO:0006310">
    <property type="term" value="P:DNA recombination"/>
    <property type="evidence" value="ECO:0007669"/>
    <property type="project" value="UniProtKB-UniRule"/>
</dbReference>
<dbReference type="GO" id="GO:0006281">
    <property type="term" value="P:DNA repair"/>
    <property type="evidence" value="ECO:0007669"/>
    <property type="project" value="UniProtKB-UniRule"/>
</dbReference>
<dbReference type="GO" id="GO:0009432">
    <property type="term" value="P:SOS response"/>
    <property type="evidence" value="ECO:0000318"/>
    <property type="project" value="GO_Central"/>
</dbReference>
<dbReference type="CDD" id="cd14332">
    <property type="entry name" value="UBA_RuvA_C"/>
    <property type="match status" value="1"/>
</dbReference>
<dbReference type="Gene3D" id="1.10.150.20">
    <property type="entry name" value="5' to 3' exonuclease, C-terminal subdomain"/>
    <property type="match status" value="1"/>
</dbReference>
<dbReference type="Gene3D" id="1.10.8.10">
    <property type="entry name" value="DNA helicase RuvA subunit, C-terminal domain"/>
    <property type="match status" value="1"/>
</dbReference>
<dbReference type="Gene3D" id="2.40.50.140">
    <property type="entry name" value="Nucleic acid-binding proteins"/>
    <property type="match status" value="1"/>
</dbReference>
<dbReference type="HAMAP" id="MF_00031">
    <property type="entry name" value="DNA_HJ_migration_RuvA"/>
    <property type="match status" value="1"/>
</dbReference>
<dbReference type="InterPro" id="IPR013849">
    <property type="entry name" value="DNA_helicase_Holl-junc_RuvA_I"/>
</dbReference>
<dbReference type="InterPro" id="IPR003583">
    <property type="entry name" value="Hlx-hairpin-Hlx_DNA-bd_motif"/>
</dbReference>
<dbReference type="InterPro" id="IPR012340">
    <property type="entry name" value="NA-bd_OB-fold"/>
</dbReference>
<dbReference type="InterPro" id="IPR000085">
    <property type="entry name" value="RuvA"/>
</dbReference>
<dbReference type="InterPro" id="IPR010994">
    <property type="entry name" value="RuvA_2-like"/>
</dbReference>
<dbReference type="InterPro" id="IPR011114">
    <property type="entry name" value="RuvA_C"/>
</dbReference>
<dbReference type="NCBIfam" id="TIGR00084">
    <property type="entry name" value="ruvA"/>
    <property type="match status" value="1"/>
</dbReference>
<dbReference type="Pfam" id="PF14520">
    <property type="entry name" value="HHH_5"/>
    <property type="match status" value="1"/>
</dbReference>
<dbReference type="Pfam" id="PF01330">
    <property type="entry name" value="RuvA_N"/>
    <property type="match status" value="1"/>
</dbReference>
<dbReference type="SMART" id="SM00278">
    <property type="entry name" value="HhH1"/>
    <property type="match status" value="2"/>
</dbReference>
<dbReference type="SUPFAM" id="SSF50249">
    <property type="entry name" value="Nucleic acid-binding proteins"/>
    <property type="match status" value="1"/>
</dbReference>
<dbReference type="SUPFAM" id="SSF47781">
    <property type="entry name" value="RuvA domain 2-like"/>
    <property type="match status" value="1"/>
</dbReference>
<proteinExistence type="inferred from homology"/>
<sequence>MYEYIKGTLTHINESYVVIESFGIGYAIMLSERFLVDLRAFMHQEVLIYVHSVIRETEHVLYGFSSRAERECFRLLISFSGIGPKTGLSILNMFPLQELCSIARLENVKAIASVPGIGKKTAEKLMVDLKQKLPTLMPLYLEEPVVPSSTANSSFKEGIGALMNLGFSRLAADRMMTEAVKELSEEASVAELLPIALRKS</sequence>
<feature type="chain" id="PRO_0000094619" description="Holliday junction branch migration complex subunit RuvA">
    <location>
        <begin position="1"/>
        <end position="200"/>
    </location>
</feature>
<feature type="region of interest" description="Domain I" evidence="1">
    <location>
        <begin position="1"/>
        <end position="65"/>
    </location>
</feature>
<feature type="region of interest" description="Domain II" evidence="1">
    <location>
        <begin position="66"/>
        <end position="144"/>
    </location>
</feature>
<feature type="region of interest" description="Flexible linker" evidence="1">
    <location>
        <begin position="145"/>
        <end position="149"/>
    </location>
</feature>
<feature type="region of interest" description="Domain III" evidence="1">
    <location>
        <begin position="150"/>
        <end position="200"/>
    </location>
</feature>
<reference key="1">
    <citation type="journal article" date="1998" name="Science">
        <title>Genome sequence of an obligate intracellular pathogen of humans: Chlamydia trachomatis.</title>
        <authorList>
            <person name="Stephens R.S."/>
            <person name="Kalman S."/>
            <person name="Lammel C.J."/>
            <person name="Fan J."/>
            <person name="Marathe R."/>
            <person name="Aravind L."/>
            <person name="Mitchell W.P."/>
            <person name="Olinger L."/>
            <person name="Tatusov R.L."/>
            <person name="Zhao Q."/>
            <person name="Koonin E.V."/>
            <person name="Davis R.W."/>
        </authorList>
    </citation>
    <scope>NUCLEOTIDE SEQUENCE [LARGE SCALE GENOMIC DNA]</scope>
    <source>
        <strain>ATCC VR-885 / DSM 19411 / UW-3/Cx</strain>
    </source>
</reference>
<organism>
    <name type="scientific">Chlamydia trachomatis serovar D (strain ATCC VR-885 / DSM 19411 / UW-3/Cx)</name>
    <dbReference type="NCBI Taxonomy" id="272561"/>
    <lineage>
        <taxon>Bacteria</taxon>
        <taxon>Pseudomonadati</taxon>
        <taxon>Chlamydiota</taxon>
        <taxon>Chlamydiia</taxon>
        <taxon>Chlamydiales</taxon>
        <taxon>Chlamydiaceae</taxon>
        <taxon>Chlamydia/Chlamydophila group</taxon>
        <taxon>Chlamydia</taxon>
    </lineage>
</organism>
<accession>O84509</accession>
<name>RUVA_CHLTR</name>